<evidence type="ECO:0000250" key="1"/>
<evidence type="ECO:0000255" key="2">
    <source>
        <dbReference type="HAMAP-Rule" id="MF_00300"/>
    </source>
</evidence>
<protein>
    <recommendedName>
        <fullName evidence="2">Chorismate synthase</fullName>
        <shortName evidence="2">CS</shortName>
        <ecNumber evidence="2">4.2.3.5</ecNumber>
    </recommendedName>
    <alternativeName>
        <fullName evidence="2">5-enolpyruvylshikimate-3-phosphate phospholyase</fullName>
    </alternativeName>
</protein>
<proteinExistence type="inferred from homology"/>
<feature type="initiator methionine" description="Removed" evidence="1">
    <location>
        <position position="1"/>
    </location>
</feature>
<feature type="chain" id="PRO_0000140639" description="Chorismate synthase">
    <location>
        <begin position="2"/>
        <end position="361"/>
    </location>
</feature>
<feature type="binding site" evidence="2">
    <location>
        <position position="48"/>
    </location>
    <ligand>
        <name>NADP(+)</name>
        <dbReference type="ChEBI" id="CHEBI:58349"/>
    </ligand>
</feature>
<feature type="binding site" evidence="2">
    <location>
        <position position="54"/>
    </location>
    <ligand>
        <name>NADP(+)</name>
        <dbReference type="ChEBI" id="CHEBI:58349"/>
    </ligand>
</feature>
<feature type="binding site" evidence="2">
    <location>
        <begin position="125"/>
        <end position="127"/>
    </location>
    <ligand>
        <name>FMN</name>
        <dbReference type="ChEBI" id="CHEBI:58210"/>
    </ligand>
</feature>
<feature type="binding site" evidence="2">
    <location>
        <begin position="238"/>
        <end position="239"/>
    </location>
    <ligand>
        <name>FMN</name>
        <dbReference type="ChEBI" id="CHEBI:58210"/>
    </ligand>
</feature>
<feature type="binding site" evidence="2">
    <location>
        <position position="278"/>
    </location>
    <ligand>
        <name>FMN</name>
        <dbReference type="ChEBI" id="CHEBI:58210"/>
    </ligand>
</feature>
<feature type="binding site" evidence="2">
    <location>
        <begin position="293"/>
        <end position="297"/>
    </location>
    <ligand>
        <name>FMN</name>
        <dbReference type="ChEBI" id="CHEBI:58210"/>
    </ligand>
</feature>
<feature type="binding site" evidence="2">
    <location>
        <position position="319"/>
    </location>
    <ligand>
        <name>FMN</name>
        <dbReference type="ChEBI" id="CHEBI:58210"/>
    </ligand>
</feature>
<organism>
    <name type="scientific">Salmonella typhimurium (strain LT2 / SGSC1412 / ATCC 700720)</name>
    <dbReference type="NCBI Taxonomy" id="99287"/>
    <lineage>
        <taxon>Bacteria</taxon>
        <taxon>Pseudomonadati</taxon>
        <taxon>Pseudomonadota</taxon>
        <taxon>Gammaproteobacteria</taxon>
        <taxon>Enterobacterales</taxon>
        <taxon>Enterobacteriaceae</taxon>
        <taxon>Salmonella</taxon>
    </lineage>
</organism>
<sequence>MAGNTIGQLFRVTTFGESHGLALGCIVDGVPPGIPLTEADLQHDLDRRRPGTSRYTTQRREPDQVKILSGVFDGVTTGTSIGLLIENTDQRSQDYSAIKDVFRPGHADYTYEQKYGLRDYRGGGRSSARETAMRVAAGAIAKKYLAEKFGIEIRGCLTQMGDIPLEIKDWRQVELNPFFCPDADKLDALDELMRALKKEGDSIGAKVTVMASGVPAGLGEPVFDRLDADIAHALMSINAVKGVEIGEGFNVVALRGSQNRDEITAQGFQSNHAGGILGGISSGQHIVAHMALKPTSSITVPGRTINRAGEEVEMITKGRHDPCVGIRAVPIAEAMLAIVLMDHLLRHRAQNADVKTEIPRW</sequence>
<gene>
    <name evidence="2" type="primary">aroC</name>
    <name type="ordered locus">STM2384</name>
</gene>
<keyword id="KW-0028">Amino-acid biosynthesis</keyword>
<keyword id="KW-0057">Aromatic amino acid biosynthesis</keyword>
<keyword id="KW-0274">FAD</keyword>
<keyword id="KW-0285">Flavoprotein</keyword>
<keyword id="KW-0288">FMN</keyword>
<keyword id="KW-0456">Lyase</keyword>
<keyword id="KW-0521">NADP</keyword>
<keyword id="KW-1185">Reference proteome</keyword>
<comment type="function">
    <text evidence="2">Catalyzes the anti-1,4-elimination of the C-3 phosphate and the C-6 proR hydrogen from 5-enolpyruvylshikimate-3-phosphate (EPSP) to yield chorismate, which is the branch point compound that serves as the starting substrate for the three terminal pathways of aromatic amino acid biosynthesis. This reaction introduces a second double bond into the aromatic ring system.</text>
</comment>
<comment type="catalytic activity">
    <reaction evidence="2">
        <text>5-O-(1-carboxyvinyl)-3-phosphoshikimate = chorismate + phosphate</text>
        <dbReference type="Rhea" id="RHEA:21020"/>
        <dbReference type="ChEBI" id="CHEBI:29748"/>
        <dbReference type="ChEBI" id="CHEBI:43474"/>
        <dbReference type="ChEBI" id="CHEBI:57701"/>
        <dbReference type="EC" id="4.2.3.5"/>
    </reaction>
</comment>
<comment type="cofactor">
    <cofactor evidence="2">
        <name>FMNH2</name>
        <dbReference type="ChEBI" id="CHEBI:57618"/>
    </cofactor>
    <text evidence="2">Reduced FMN (FMNH(2)).</text>
</comment>
<comment type="pathway">
    <text evidence="2">Metabolic intermediate biosynthesis; chorismate biosynthesis; chorismate from D-erythrose 4-phosphate and phosphoenolpyruvate: step 7/7.</text>
</comment>
<comment type="subunit">
    <text evidence="2">Homotetramer.</text>
</comment>
<comment type="similarity">
    <text evidence="2">Belongs to the chorismate synthase family.</text>
</comment>
<dbReference type="EC" id="4.2.3.5" evidence="2"/>
<dbReference type="EMBL" id="AE006468">
    <property type="protein sequence ID" value="AAL21285.1"/>
    <property type="molecule type" value="Genomic_DNA"/>
</dbReference>
<dbReference type="RefSeq" id="NP_461326.1">
    <property type="nucleotide sequence ID" value="NC_003197.2"/>
</dbReference>
<dbReference type="RefSeq" id="WP_000918456.1">
    <property type="nucleotide sequence ID" value="NC_003197.2"/>
</dbReference>
<dbReference type="SMR" id="P58729"/>
<dbReference type="STRING" id="99287.STM2384"/>
<dbReference type="PaxDb" id="99287-STM2384"/>
<dbReference type="GeneID" id="1253906"/>
<dbReference type="KEGG" id="stm:STM2384"/>
<dbReference type="PATRIC" id="fig|99287.12.peg.2523"/>
<dbReference type="HOGENOM" id="CLU_034547_0_2_6"/>
<dbReference type="OMA" id="MLSINAV"/>
<dbReference type="PhylomeDB" id="P58729"/>
<dbReference type="BioCyc" id="SENT99287:STM2384-MONOMER"/>
<dbReference type="UniPathway" id="UPA00053">
    <property type="reaction ID" value="UER00090"/>
</dbReference>
<dbReference type="Proteomes" id="UP000001014">
    <property type="component" value="Chromosome"/>
</dbReference>
<dbReference type="GO" id="GO:0005829">
    <property type="term" value="C:cytosol"/>
    <property type="evidence" value="ECO:0000318"/>
    <property type="project" value="GO_Central"/>
</dbReference>
<dbReference type="GO" id="GO:0004107">
    <property type="term" value="F:chorismate synthase activity"/>
    <property type="evidence" value="ECO:0000318"/>
    <property type="project" value="GO_Central"/>
</dbReference>
<dbReference type="GO" id="GO:0010181">
    <property type="term" value="F:FMN binding"/>
    <property type="evidence" value="ECO:0000318"/>
    <property type="project" value="GO_Central"/>
</dbReference>
<dbReference type="GO" id="GO:0008652">
    <property type="term" value="P:amino acid biosynthetic process"/>
    <property type="evidence" value="ECO:0007669"/>
    <property type="project" value="UniProtKB-KW"/>
</dbReference>
<dbReference type="GO" id="GO:0009073">
    <property type="term" value="P:aromatic amino acid family biosynthetic process"/>
    <property type="evidence" value="ECO:0000318"/>
    <property type="project" value="GO_Central"/>
</dbReference>
<dbReference type="GO" id="GO:0009423">
    <property type="term" value="P:chorismate biosynthetic process"/>
    <property type="evidence" value="ECO:0000318"/>
    <property type="project" value="GO_Central"/>
</dbReference>
<dbReference type="CDD" id="cd07304">
    <property type="entry name" value="Chorismate_synthase"/>
    <property type="match status" value="1"/>
</dbReference>
<dbReference type="FunFam" id="3.60.150.10:FF:000001">
    <property type="entry name" value="Chorismate synthase"/>
    <property type="match status" value="1"/>
</dbReference>
<dbReference type="Gene3D" id="3.60.150.10">
    <property type="entry name" value="Chorismate synthase AroC"/>
    <property type="match status" value="1"/>
</dbReference>
<dbReference type="HAMAP" id="MF_00300">
    <property type="entry name" value="Chorismate_synth"/>
    <property type="match status" value="1"/>
</dbReference>
<dbReference type="InterPro" id="IPR000453">
    <property type="entry name" value="Chorismate_synth"/>
</dbReference>
<dbReference type="InterPro" id="IPR035904">
    <property type="entry name" value="Chorismate_synth_AroC_sf"/>
</dbReference>
<dbReference type="InterPro" id="IPR020541">
    <property type="entry name" value="Chorismate_synthase_CS"/>
</dbReference>
<dbReference type="NCBIfam" id="TIGR00033">
    <property type="entry name" value="aroC"/>
    <property type="match status" value="1"/>
</dbReference>
<dbReference type="NCBIfam" id="NF003793">
    <property type="entry name" value="PRK05382.1"/>
    <property type="match status" value="1"/>
</dbReference>
<dbReference type="PANTHER" id="PTHR21085">
    <property type="entry name" value="CHORISMATE SYNTHASE"/>
    <property type="match status" value="1"/>
</dbReference>
<dbReference type="PANTHER" id="PTHR21085:SF0">
    <property type="entry name" value="CHORISMATE SYNTHASE"/>
    <property type="match status" value="1"/>
</dbReference>
<dbReference type="Pfam" id="PF01264">
    <property type="entry name" value="Chorismate_synt"/>
    <property type="match status" value="1"/>
</dbReference>
<dbReference type="PIRSF" id="PIRSF001456">
    <property type="entry name" value="Chorismate_synth"/>
    <property type="match status" value="1"/>
</dbReference>
<dbReference type="SUPFAM" id="SSF103263">
    <property type="entry name" value="Chorismate synthase, AroC"/>
    <property type="match status" value="1"/>
</dbReference>
<dbReference type="PROSITE" id="PS00787">
    <property type="entry name" value="CHORISMATE_SYNTHASE_1"/>
    <property type="match status" value="1"/>
</dbReference>
<dbReference type="PROSITE" id="PS00788">
    <property type="entry name" value="CHORISMATE_SYNTHASE_2"/>
    <property type="match status" value="1"/>
</dbReference>
<dbReference type="PROSITE" id="PS00789">
    <property type="entry name" value="CHORISMATE_SYNTHASE_3"/>
    <property type="match status" value="1"/>
</dbReference>
<name>AROC_SALTY</name>
<reference key="1">
    <citation type="journal article" date="2001" name="Nature">
        <title>Complete genome sequence of Salmonella enterica serovar Typhimurium LT2.</title>
        <authorList>
            <person name="McClelland M."/>
            <person name="Sanderson K.E."/>
            <person name="Spieth J."/>
            <person name="Clifton S.W."/>
            <person name="Latreille P."/>
            <person name="Courtney L."/>
            <person name="Porwollik S."/>
            <person name="Ali J."/>
            <person name="Dante M."/>
            <person name="Du F."/>
            <person name="Hou S."/>
            <person name="Layman D."/>
            <person name="Leonard S."/>
            <person name="Nguyen C."/>
            <person name="Scott K."/>
            <person name="Holmes A."/>
            <person name="Grewal N."/>
            <person name="Mulvaney E."/>
            <person name="Ryan E."/>
            <person name="Sun H."/>
            <person name="Florea L."/>
            <person name="Miller W."/>
            <person name="Stoneking T."/>
            <person name="Nhan M."/>
            <person name="Waterston R."/>
            <person name="Wilson R.K."/>
        </authorList>
    </citation>
    <scope>NUCLEOTIDE SEQUENCE [LARGE SCALE GENOMIC DNA]</scope>
    <source>
        <strain>LT2 / SGSC1412 / ATCC 700720</strain>
    </source>
</reference>
<accession>P58729</accession>
<accession>Q8ZNA9</accession>